<evidence type="ECO:0000255" key="1">
    <source>
        <dbReference type="HAMAP-Rule" id="MF_00564"/>
    </source>
</evidence>
<reference key="1">
    <citation type="journal article" date="2010" name="Appl. Environ. Microbiol.">
        <title>The genome sequence of Psychrobacter arcticus 273-4, a psychroactive Siberian permafrost bacterium, reveals mechanisms for adaptation to low-temperature growth.</title>
        <authorList>
            <person name="Ayala-del-Rio H.L."/>
            <person name="Chain P.S."/>
            <person name="Grzymski J.J."/>
            <person name="Ponder M.A."/>
            <person name="Ivanova N."/>
            <person name="Bergholz P.W."/>
            <person name="Di Bartolo G."/>
            <person name="Hauser L."/>
            <person name="Land M."/>
            <person name="Bakermans C."/>
            <person name="Rodrigues D."/>
            <person name="Klappenbach J."/>
            <person name="Zarka D."/>
            <person name="Larimer F."/>
            <person name="Richardson P."/>
            <person name="Murray A."/>
            <person name="Thomashow M."/>
            <person name="Tiedje J.M."/>
        </authorList>
    </citation>
    <scope>NUCLEOTIDE SEQUENCE [LARGE SCALE GENOMIC DNA]</scope>
    <source>
        <strain>DSM 17307 / VKM B-2377 / 273-4</strain>
    </source>
</reference>
<accession>Q4FQJ5</accession>
<organism>
    <name type="scientific">Psychrobacter arcticus (strain DSM 17307 / VKM B-2377 / 273-4)</name>
    <dbReference type="NCBI Taxonomy" id="259536"/>
    <lineage>
        <taxon>Bacteria</taxon>
        <taxon>Pseudomonadati</taxon>
        <taxon>Pseudomonadota</taxon>
        <taxon>Gammaproteobacteria</taxon>
        <taxon>Moraxellales</taxon>
        <taxon>Moraxellaceae</taxon>
        <taxon>Psychrobacter</taxon>
    </lineage>
</organism>
<comment type="function">
    <text evidence="1">Phosphorolytic 3'-5' exoribonuclease that plays an important role in tRNA 3'-end maturation. Removes nucleotide residues following the 3'-CCA terminus of tRNAs; can also add nucleotides to the ends of RNA molecules by using nucleoside diphosphates as substrates, but this may not be physiologically important. Probably plays a role in initiation of 16S rRNA degradation (leading to ribosome degradation) during starvation.</text>
</comment>
<comment type="catalytic activity">
    <reaction evidence="1">
        <text>tRNA(n+1) + phosphate = tRNA(n) + a ribonucleoside 5'-diphosphate</text>
        <dbReference type="Rhea" id="RHEA:10628"/>
        <dbReference type="Rhea" id="RHEA-COMP:17343"/>
        <dbReference type="Rhea" id="RHEA-COMP:17344"/>
        <dbReference type="ChEBI" id="CHEBI:43474"/>
        <dbReference type="ChEBI" id="CHEBI:57930"/>
        <dbReference type="ChEBI" id="CHEBI:173114"/>
        <dbReference type="EC" id="2.7.7.56"/>
    </reaction>
</comment>
<comment type="subunit">
    <text evidence="1">Homohexameric ring arranged as a trimer of dimers.</text>
</comment>
<comment type="similarity">
    <text evidence="1">Belongs to the RNase PH family.</text>
</comment>
<name>RNPH_PSYA2</name>
<proteinExistence type="inferred from homology"/>
<protein>
    <recommendedName>
        <fullName evidence="1">Ribonuclease PH</fullName>
        <shortName evidence="1">RNase PH</shortName>
        <ecNumber evidence="1">2.7.7.56</ecNumber>
    </recommendedName>
    <alternativeName>
        <fullName evidence="1">tRNA nucleotidyltransferase</fullName>
    </alternativeName>
</protein>
<feature type="chain" id="PRO_1000024856" description="Ribonuclease PH">
    <location>
        <begin position="1"/>
        <end position="238"/>
    </location>
</feature>
<feature type="binding site" evidence="1">
    <location>
        <position position="86"/>
    </location>
    <ligand>
        <name>phosphate</name>
        <dbReference type="ChEBI" id="CHEBI:43474"/>
        <note>substrate</note>
    </ligand>
</feature>
<feature type="binding site" evidence="1">
    <location>
        <begin position="124"/>
        <end position="126"/>
    </location>
    <ligand>
        <name>phosphate</name>
        <dbReference type="ChEBI" id="CHEBI:43474"/>
        <note>substrate</note>
    </ligand>
</feature>
<dbReference type="EC" id="2.7.7.56" evidence="1"/>
<dbReference type="EMBL" id="CP000082">
    <property type="protein sequence ID" value="AAZ19713.1"/>
    <property type="molecule type" value="Genomic_DNA"/>
</dbReference>
<dbReference type="RefSeq" id="WP_011281123.1">
    <property type="nucleotide sequence ID" value="NC_007204.1"/>
</dbReference>
<dbReference type="SMR" id="Q4FQJ5"/>
<dbReference type="STRING" id="259536.Psyc_1865"/>
<dbReference type="KEGG" id="par:Psyc_1865"/>
<dbReference type="eggNOG" id="COG0689">
    <property type="taxonomic scope" value="Bacteria"/>
</dbReference>
<dbReference type="HOGENOM" id="CLU_050858_0_0_6"/>
<dbReference type="OrthoDB" id="9802265at2"/>
<dbReference type="Proteomes" id="UP000000546">
    <property type="component" value="Chromosome"/>
</dbReference>
<dbReference type="GO" id="GO:0000175">
    <property type="term" value="F:3'-5'-RNA exonuclease activity"/>
    <property type="evidence" value="ECO:0007669"/>
    <property type="project" value="UniProtKB-UniRule"/>
</dbReference>
<dbReference type="GO" id="GO:0000049">
    <property type="term" value="F:tRNA binding"/>
    <property type="evidence" value="ECO:0007669"/>
    <property type="project" value="UniProtKB-UniRule"/>
</dbReference>
<dbReference type="GO" id="GO:0009022">
    <property type="term" value="F:tRNA nucleotidyltransferase activity"/>
    <property type="evidence" value="ECO:0007669"/>
    <property type="project" value="UniProtKB-UniRule"/>
</dbReference>
<dbReference type="GO" id="GO:0016075">
    <property type="term" value="P:rRNA catabolic process"/>
    <property type="evidence" value="ECO:0007669"/>
    <property type="project" value="UniProtKB-UniRule"/>
</dbReference>
<dbReference type="GO" id="GO:0006364">
    <property type="term" value="P:rRNA processing"/>
    <property type="evidence" value="ECO:0007669"/>
    <property type="project" value="UniProtKB-KW"/>
</dbReference>
<dbReference type="GO" id="GO:0008033">
    <property type="term" value="P:tRNA processing"/>
    <property type="evidence" value="ECO:0007669"/>
    <property type="project" value="UniProtKB-UniRule"/>
</dbReference>
<dbReference type="CDD" id="cd11362">
    <property type="entry name" value="RNase_PH_bact"/>
    <property type="match status" value="1"/>
</dbReference>
<dbReference type="FunFam" id="3.30.230.70:FF:000003">
    <property type="entry name" value="Ribonuclease PH"/>
    <property type="match status" value="1"/>
</dbReference>
<dbReference type="Gene3D" id="3.30.230.70">
    <property type="entry name" value="GHMP Kinase, N-terminal domain"/>
    <property type="match status" value="1"/>
</dbReference>
<dbReference type="HAMAP" id="MF_00564">
    <property type="entry name" value="RNase_PH"/>
    <property type="match status" value="1"/>
</dbReference>
<dbReference type="InterPro" id="IPR001247">
    <property type="entry name" value="ExoRNase_PH_dom1"/>
</dbReference>
<dbReference type="InterPro" id="IPR015847">
    <property type="entry name" value="ExoRNase_PH_dom2"/>
</dbReference>
<dbReference type="InterPro" id="IPR036345">
    <property type="entry name" value="ExoRNase_PH_dom2_sf"/>
</dbReference>
<dbReference type="InterPro" id="IPR027408">
    <property type="entry name" value="PNPase/RNase_PH_dom_sf"/>
</dbReference>
<dbReference type="InterPro" id="IPR020568">
    <property type="entry name" value="Ribosomal_Su5_D2-typ_SF"/>
</dbReference>
<dbReference type="InterPro" id="IPR050080">
    <property type="entry name" value="RNase_PH"/>
</dbReference>
<dbReference type="InterPro" id="IPR002381">
    <property type="entry name" value="RNase_PH_bac-type"/>
</dbReference>
<dbReference type="InterPro" id="IPR018336">
    <property type="entry name" value="RNase_PH_CS"/>
</dbReference>
<dbReference type="NCBIfam" id="TIGR01966">
    <property type="entry name" value="RNasePH"/>
    <property type="match status" value="1"/>
</dbReference>
<dbReference type="PANTHER" id="PTHR11953">
    <property type="entry name" value="EXOSOME COMPLEX COMPONENT"/>
    <property type="match status" value="1"/>
</dbReference>
<dbReference type="PANTHER" id="PTHR11953:SF0">
    <property type="entry name" value="EXOSOME COMPLEX COMPONENT RRP41"/>
    <property type="match status" value="1"/>
</dbReference>
<dbReference type="Pfam" id="PF01138">
    <property type="entry name" value="RNase_PH"/>
    <property type="match status" value="1"/>
</dbReference>
<dbReference type="Pfam" id="PF03725">
    <property type="entry name" value="RNase_PH_C"/>
    <property type="match status" value="1"/>
</dbReference>
<dbReference type="SUPFAM" id="SSF55666">
    <property type="entry name" value="Ribonuclease PH domain 2-like"/>
    <property type="match status" value="1"/>
</dbReference>
<dbReference type="SUPFAM" id="SSF54211">
    <property type="entry name" value="Ribosomal protein S5 domain 2-like"/>
    <property type="match status" value="1"/>
</dbReference>
<dbReference type="PROSITE" id="PS01277">
    <property type="entry name" value="RIBONUCLEASE_PH"/>
    <property type="match status" value="1"/>
</dbReference>
<sequence length="238" mass="26052">MRIDNRELNQLRSISFERHYTKHAEGSVLVSFGDTKVLCTASVESGVPRWLKGKGKGWITAEYGMLPRATNTRNQREAARGKQSGRTQEIQRLIGRSLRAMIDLSKLGENTIYLDCDVLQADGGTRTASVTGAAIALIDALESIQKTKKLKADPLIGLVAAVSVGMKDGEAYLDLNYEEDASCDTDLNVVMTQKGEFIELQGTAEEKPFTRAQADDMLVLAEKGIAELIAMQKTALGW</sequence>
<keyword id="KW-0548">Nucleotidyltransferase</keyword>
<keyword id="KW-1185">Reference proteome</keyword>
<keyword id="KW-0694">RNA-binding</keyword>
<keyword id="KW-0698">rRNA processing</keyword>
<keyword id="KW-0808">Transferase</keyword>
<keyword id="KW-0819">tRNA processing</keyword>
<keyword id="KW-0820">tRNA-binding</keyword>
<gene>
    <name evidence="1" type="primary">rph</name>
    <name type="ordered locus">Psyc_1865</name>
</gene>